<reference key="1">
    <citation type="journal article" date="2006" name="PLoS Genet.">
        <title>The complete genome sequence and comparative genome analysis of the high pathogenicity Yersinia enterocolitica strain 8081.</title>
        <authorList>
            <person name="Thomson N.R."/>
            <person name="Howard S."/>
            <person name="Wren B.W."/>
            <person name="Holden M.T.G."/>
            <person name="Crossman L."/>
            <person name="Challis G.L."/>
            <person name="Churcher C."/>
            <person name="Mungall K."/>
            <person name="Brooks K."/>
            <person name="Chillingworth T."/>
            <person name="Feltwell T."/>
            <person name="Abdellah Z."/>
            <person name="Hauser H."/>
            <person name="Jagels K."/>
            <person name="Maddison M."/>
            <person name="Moule S."/>
            <person name="Sanders M."/>
            <person name="Whitehead S."/>
            <person name="Quail M.A."/>
            <person name="Dougan G."/>
            <person name="Parkhill J."/>
            <person name="Prentice M.B."/>
        </authorList>
    </citation>
    <scope>NUCLEOTIDE SEQUENCE [LARGE SCALE GENOMIC DNA]</scope>
    <source>
        <strain>NCTC 13174 / 8081</strain>
    </source>
</reference>
<dbReference type="EMBL" id="AM286415">
    <property type="status" value="NOT_ANNOTATED_CDS"/>
    <property type="molecule type" value="Genomic_DNA"/>
</dbReference>
<dbReference type="Proteomes" id="UP000000642">
    <property type="component" value="Chromosome"/>
</dbReference>
<dbReference type="GO" id="GO:0009088">
    <property type="term" value="P:threonine biosynthetic process"/>
    <property type="evidence" value="ECO:0007669"/>
    <property type="project" value="UniProtKB-UniRule"/>
</dbReference>
<dbReference type="GO" id="GO:0031556">
    <property type="term" value="P:transcriptional attenuation by ribosome"/>
    <property type="evidence" value="ECO:0007669"/>
    <property type="project" value="UniProtKB-UniRule"/>
</dbReference>
<dbReference type="HAMAP" id="MF_01907">
    <property type="entry name" value="Leader_Thr"/>
    <property type="match status" value="1"/>
</dbReference>
<dbReference type="InterPro" id="IPR011720">
    <property type="entry name" value="Thr_lead_pept"/>
</dbReference>
<dbReference type="NCBIfam" id="TIGR02077">
    <property type="entry name" value="thr_lead_pep"/>
    <property type="match status" value="1"/>
</dbReference>
<dbReference type="Pfam" id="PF08254">
    <property type="entry name" value="Leader_Thr"/>
    <property type="match status" value="1"/>
</dbReference>
<protein>
    <recommendedName>
        <fullName evidence="1">thr operon leader peptide</fullName>
    </recommendedName>
    <alternativeName>
        <fullName evidence="1">thr operon attenuator</fullName>
    </alternativeName>
</protein>
<proteinExistence type="inferred from homology"/>
<feature type="peptide" id="PRO_0000312896" description="thr operon leader peptide">
    <location>
        <begin position="1"/>
        <end position="22"/>
    </location>
</feature>
<accession>P0C5Z4</accession>
<comment type="function">
    <text evidence="1">This protein is involved in control of the biosynthesis of threonine.</text>
</comment>
<comment type="similarity">
    <text evidence="1">Belongs to the thr operon leader peptide family.</text>
</comment>
<gene>
    <name evidence="1" type="primary">thrL</name>
    <name type="ordered locus">YE0599.1</name>
</gene>
<evidence type="ECO:0000255" key="1">
    <source>
        <dbReference type="HAMAP-Rule" id="MF_01907"/>
    </source>
</evidence>
<keyword id="KW-0028">Amino-acid biosynthesis</keyword>
<keyword id="KW-0428">Leader peptide</keyword>
<keyword id="KW-0791">Threonine biosynthesis</keyword>
<organism>
    <name type="scientific">Yersinia enterocolitica serotype O:8 / biotype 1B (strain NCTC 13174 / 8081)</name>
    <dbReference type="NCBI Taxonomy" id="393305"/>
    <lineage>
        <taxon>Bacteria</taxon>
        <taxon>Pseudomonadati</taxon>
        <taxon>Pseudomonadota</taxon>
        <taxon>Gammaproteobacteria</taxon>
        <taxon>Enterobacterales</taxon>
        <taxon>Yersiniaceae</taxon>
        <taxon>Yersinia</taxon>
    </lineage>
</organism>
<sequence length="22" mass="2337">MQYISLNTTIITTTETTGYGAG</sequence>
<name>LPT_YERE8</name>